<gene>
    <name evidence="1" type="primary">dsbB</name>
    <name type="ordered locus">XOO0894</name>
</gene>
<accession>Q2P728</accession>
<reference key="1">
    <citation type="journal article" date="2005" name="Jpn. Agric. Res. Q.">
        <title>Genome sequence of Xanthomonas oryzae pv. oryzae suggests contribution of large numbers of effector genes and insertion sequences to its race diversity.</title>
        <authorList>
            <person name="Ochiai H."/>
            <person name="Inoue Y."/>
            <person name="Takeya M."/>
            <person name="Sasaki A."/>
            <person name="Kaku H."/>
        </authorList>
    </citation>
    <scope>NUCLEOTIDE SEQUENCE [LARGE SCALE GENOMIC DNA]</scope>
    <source>
        <strain>MAFF 311018</strain>
    </source>
</reference>
<organism>
    <name type="scientific">Xanthomonas oryzae pv. oryzae (strain MAFF 311018)</name>
    <dbReference type="NCBI Taxonomy" id="342109"/>
    <lineage>
        <taxon>Bacteria</taxon>
        <taxon>Pseudomonadati</taxon>
        <taxon>Pseudomonadota</taxon>
        <taxon>Gammaproteobacteria</taxon>
        <taxon>Lysobacterales</taxon>
        <taxon>Lysobacteraceae</taxon>
        <taxon>Xanthomonas</taxon>
    </lineage>
</organism>
<evidence type="ECO:0000255" key="1">
    <source>
        <dbReference type="HAMAP-Rule" id="MF_00286"/>
    </source>
</evidence>
<name>DSBB_XANOM</name>
<sequence length="172" mass="18886">MNPFRWSFRAQFLLGFLACAGLLAYAIYVQLHLGLEPCPLCIFQRIAFAALAVFFLIGALHGPRAAGARKVYGVLSFIAAGVGMGIGARHVWVQIRPKDMMSSCGPPLSFLSETMGPFEVFRTVLTGTGDCGNIDWRFLGLSMPMWSMVWFVGLALWALSAGFKARRSSLHH</sequence>
<keyword id="KW-0997">Cell inner membrane</keyword>
<keyword id="KW-1003">Cell membrane</keyword>
<keyword id="KW-0143">Chaperone</keyword>
<keyword id="KW-1015">Disulfide bond</keyword>
<keyword id="KW-0249">Electron transport</keyword>
<keyword id="KW-0472">Membrane</keyword>
<keyword id="KW-0560">Oxidoreductase</keyword>
<keyword id="KW-0676">Redox-active center</keyword>
<keyword id="KW-0812">Transmembrane</keyword>
<keyword id="KW-1133">Transmembrane helix</keyword>
<keyword id="KW-0813">Transport</keyword>
<comment type="function">
    <text evidence="1">Required for disulfide bond formation in some periplasmic proteins. Acts by oxidizing the DsbA protein.</text>
</comment>
<comment type="subcellular location">
    <subcellularLocation>
        <location evidence="1">Cell inner membrane</location>
        <topology evidence="1">Multi-pass membrane protein</topology>
    </subcellularLocation>
</comment>
<comment type="similarity">
    <text evidence="1">Belongs to the DsbB family.</text>
</comment>
<dbReference type="EMBL" id="AP008229">
    <property type="protein sequence ID" value="BAE67649.1"/>
    <property type="molecule type" value="Genomic_DNA"/>
</dbReference>
<dbReference type="RefSeq" id="WP_011407706.1">
    <property type="nucleotide sequence ID" value="NC_007705.1"/>
</dbReference>
<dbReference type="SMR" id="Q2P728"/>
<dbReference type="KEGG" id="xom:XOO0894"/>
<dbReference type="HOGENOM" id="CLU_098660_1_1_6"/>
<dbReference type="GO" id="GO:0005886">
    <property type="term" value="C:plasma membrane"/>
    <property type="evidence" value="ECO:0007669"/>
    <property type="project" value="UniProtKB-SubCell"/>
</dbReference>
<dbReference type="GO" id="GO:0009055">
    <property type="term" value="F:electron transfer activity"/>
    <property type="evidence" value="ECO:0007669"/>
    <property type="project" value="UniProtKB-UniRule"/>
</dbReference>
<dbReference type="GO" id="GO:0015035">
    <property type="term" value="F:protein-disulfide reductase activity"/>
    <property type="evidence" value="ECO:0007669"/>
    <property type="project" value="UniProtKB-UniRule"/>
</dbReference>
<dbReference type="GO" id="GO:0006457">
    <property type="term" value="P:protein folding"/>
    <property type="evidence" value="ECO:0007669"/>
    <property type="project" value="InterPro"/>
</dbReference>
<dbReference type="FunFam" id="1.20.1550.10:FF:000004">
    <property type="entry name" value="Disulfide bond formation protein B"/>
    <property type="match status" value="1"/>
</dbReference>
<dbReference type="Gene3D" id="1.20.1550.10">
    <property type="entry name" value="DsbB-like"/>
    <property type="match status" value="1"/>
</dbReference>
<dbReference type="HAMAP" id="MF_00286">
    <property type="entry name" value="DsbB"/>
    <property type="match status" value="1"/>
</dbReference>
<dbReference type="InterPro" id="IPR003752">
    <property type="entry name" value="DiS_bond_form_DsbB/BdbC"/>
</dbReference>
<dbReference type="InterPro" id="IPR022920">
    <property type="entry name" value="Disulphide_bond_form_DsbB"/>
</dbReference>
<dbReference type="InterPro" id="IPR050183">
    <property type="entry name" value="DsbB"/>
</dbReference>
<dbReference type="InterPro" id="IPR023380">
    <property type="entry name" value="DsbB-like_sf"/>
</dbReference>
<dbReference type="NCBIfam" id="NF003354">
    <property type="entry name" value="PRK04388.1"/>
    <property type="match status" value="1"/>
</dbReference>
<dbReference type="PANTHER" id="PTHR36570">
    <property type="entry name" value="DISULFIDE BOND FORMATION PROTEIN B"/>
    <property type="match status" value="1"/>
</dbReference>
<dbReference type="PANTHER" id="PTHR36570:SF3">
    <property type="entry name" value="DISULFIDE BOND FORMATION PROTEIN B"/>
    <property type="match status" value="1"/>
</dbReference>
<dbReference type="Pfam" id="PF02600">
    <property type="entry name" value="DsbB"/>
    <property type="match status" value="1"/>
</dbReference>
<dbReference type="SUPFAM" id="SSF158442">
    <property type="entry name" value="DsbB-like"/>
    <property type="match status" value="1"/>
</dbReference>
<feature type="chain" id="PRO_0000298424" description="Disulfide bond formation protein B">
    <location>
        <begin position="1"/>
        <end position="172"/>
    </location>
</feature>
<feature type="topological domain" description="Cytoplasmic" evidence="1">
    <location>
        <begin position="1"/>
        <end position="11"/>
    </location>
</feature>
<feature type="transmembrane region" description="Helical" evidence="1">
    <location>
        <begin position="12"/>
        <end position="28"/>
    </location>
</feature>
<feature type="topological domain" description="Periplasmic" evidence="1">
    <location>
        <begin position="29"/>
        <end position="46"/>
    </location>
</feature>
<feature type="transmembrane region" description="Helical" evidence="1">
    <location>
        <begin position="47"/>
        <end position="63"/>
    </location>
</feature>
<feature type="topological domain" description="Cytoplasmic" evidence="1">
    <location>
        <begin position="64"/>
        <end position="70"/>
    </location>
</feature>
<feature type="transmembrane region" description="Helical" evidence="1">
    <location>
        <begin position="71"/>
        <end position="88"/>
    </location>
</feature>
<feature type="topological domain" description="Periplasmic" evidence="1">
    <location>
        <begin position="89"/>
        <end position="145"/>
    </location>
</feature>
<feature type="transmembrane region" description="Helical" evidence="1">
    <location>
        <begin position="146"/>
        <end position="164"/>
    </location>
</feature>
<feature type="topological domain" description="Cytoplasmic" evidence="1">
    <location>
        <begin position="165"/>
        <end position="172"/>
    </location>
</feature>
<feature type="disulfide bond" description="Redox-active" evidence="1">
    <location>
        <begin position="38"/>
        <end position="41"/>
    </location>
</feature>
<feature type="disulfide bond" description="Redox-active" evidence="1">
    <location>
        <begin position="104"/>
        <end position="131"/>
    </location>
</feature>
<proteinExistence type="inferred from homology"/>
<protein>
    <recommendedName>
        <fullName evidence="1">Disulfide bond formation protein B</fullName>
    </recommendedName>
    <alternativeName>
        <fullName evidence="1">Disulfide oxidoreductase</fullName>
    </alternativeName>
</protein>